<feature type="chain" id="PRO_0000084450" description="Lethal(3)malignant brain tumor-like protein 3">
    <location>
        <begin position="1"/>
        <end position="780"/>
    </location>
</feature>
<feature type="repeat" description="MBT 1">
    <location>
        <begin position="232"/>
        <end position="332"/>
    </location>
</feature>
<feature type="repeat" description="MBT 2">
    <location>
        <begin position="340"/>
        <end position="439"/>
    </location>
</feature>
<feature type="repeat" description="MBT 3">
    <location>
        <begin position="448"/>
        <end position="543"/>
    </location>
</feature>
<feature type="domain" description="SAM" evidence="2">
    <location>
        <begin position="708"/>
        <end position="772"/>
    </location>
</feature>
<feature type="zinc finger region" description="CCHHC-type; degenerate" evidence="3">
    <location>
        <begin position="549"/>
        <end position="593"/>
    </location>
</feature>
<feature type="region of interest" description="Interaction with RBPJ. Required for transcription repressor activity on Notch target genes" evidence="7">
    <location>
        <begin position="1"/>
        <end position="64"/>
    </location>
</feature>
<feature type="region of interest" description="Disordered" evidence="4">
    <location>
        <begin position="149"/>
        <end position="220"/>
    </location>
</feature>
<feature type="region of interest" description="Disordered" evidence="4">
    <location>
        <begin position="597"/>
        <end position="665"/>
    </location>
</feature>
<feature type="region of interest" description="Interaction with DCAF5" evidence="8">
    <location>
        <begin position="600"/>
        <end position="710"/>
    </location>
</feature>
<feature type="compositionally biased region" description="Acidic residues" evidence="4">
    <location>
        <begin position="157"/>
        <end position="166"/>
    </location>
</feature>
<feature type="compositionally biased region" description="Acidic residues" evidence="4">
    <location>
        <begin position="185"/>
        <end position="194"/>
    </location>
</feature>
<feature type="compositionally biased region" description="Basic and acidic residues" evidence="4">
    <location>
        <begin position="643"/>
        <end position="661"/>
    </location>
</feature>
<feature type="modified residue" description="Phosphoserine" evidence="14 15 16 17">
    <location>
        <position position="608"/>
    </location>
</feature>
<feature type="cross-link" description="Glycyl lysine isopeptide (Lys-Gly) (interchain with G-Cter in SUMO2)" evidence="18">
    <location>
        <position position="637"/>
    </location>
</feature>
<feature type="cross-link" description="Glycyl lysine isopeptide (Lys-Gly) (interchain with G-Cter in SUMO2)" evidence="18">
    <location>
        <position position="704"/>
    </location>
</feature>
<feature type="splice variant" id="VSP_013508" description="In isoform 2." evidence="11">
    <location>
        <begin position="72"/>
        <end position="96"/>
    </location>
</feature>
<feature type="sequence variant" id="VAR_022368" description="In dbSNP:rs9388768." evidence="5 6">
    <original>T</original>
    <variation>N</variation>
    <location>
        <position position="183"/>
    </location>
</feature>
<feature type="mutagenesis site" description="Loss of interaction with DNMT1." evidence="8">
    <original>D</original>
    <variation>N</variation>
    <location>
        <position position="381"/>
    </location>
</feature>
<feature type="helix" evidence="20">
    <location>
        <begin position="234"/>
        <end position="241"/>
    </location>
</feature>
<feature type="helix" evidence="20">
    <location>
        <begin position="248"/>
        <end position="250"/>
    </location>
</feature>
<feature type="turn" evidence="20">
    <location>
        <begin position="253"/>
        <end position="255"/>
    </location>
</feature>
<feature type="strand" evidence="20">
    <location>
        <begin position="269"/>
        <end position="274"/>
    </location>
</feature>
<feature type="strand" evidence="20">
    <location>
        <begin position="277"/>
        <end position="290"/>
    </location>
</feature>
<feature type="strand" evidence="20">
    <location>
        <begin position="293"/>
        <end position="298"/>
    </location>
</feature>
<feature type="helix" evidence="20">
    <location>
        <begin position="303"/>
        <end position="305"/>
    </location>
</feature>
<feature type="strand" evidence="20">
    <location>
        <begin position="307"/>
        <end position="310"/>
    </location>
</feature>
<feature type="strand" evidence="20">
    <location>
        <begin position="314"/>
        <end position="317"/>
    </location>
</feature>
<feature type="helix" evidence="20">
    <location>
        <begin position="321"/>
        <end position="325"/>
    </location>
</feature>
<feature type="turn" evidence="20">
    <location>
        <begin position="337"/>
        <end position="339"/>
    </location>
</feature>
<feature type="helix" evidence="20">
    <location>
        <begin position="342"/>
        <end position="348"/>
    </location>
</feature>
<feature type="helix" evidence="20">
    <location>
        <begin position="356"/>
        <end position="358"/>
    </location>
</feature>
<feature type="turn" evidence="20">
    <location>
        <begin position="360"/>
        <end position="363"/>
    </location>
</feature>
<feature type="strand" evidence="20">
    <location>
        <begin position="376"/>
        <end position="381"/>
    </location>
</feature>
<feature type="strand" evidence="20">
    <location>
        <begin position="384"/>
        <end position="397"/>
    </location>
</feature>
<feature type="strand" evidence="20">
    <location>
        <begin position="400"/>
        <end position="405"/>
    </location>
</feature>
<feature type="helix" evidence="20">
    <location>
        <begin position="410"/>
        <end position="412"/>
    </location>
</feature>
<feature type="strand" evidence="20">
    <location>
        <begin position="414"/>
        <end position="416"/>
    </location>
</feature>
<feature type="helix" evidence="20">
    <location>
        <begin position="428"/>
        <end position="431"/>
    </location>
</feature>
<feature type="helix" evidence="21">
    <location>
        <begin position="445"/>
        <end position="447"/>
    </location>
</feature>
<feature type="helix" evidence="20">
    <location>
        <begin position="450"/>
        <end position="456"/>
    </location>
</feature>
<feature type="helix" evidence="20">
    <location>
        <begin position="464"/>
        <end position="466"/>
    </location>
</feature>
<feature type="strand" evidence="19">
    <location>
        <begin position="472"/>
        <end position="474"/>
    </location>
</feature>
<feature type="strand" evidence="20">
    <location>
        <begin position="480"/>
        <end position="484"/>
    </location>
</feature>
<feature type="strand" evidence="20">
    <location>
        <begin position="486"/>
        <end position="488"/>
    </location>
</feature>
<feature type="strand" evidence="20">
    <location>
        <begin position="492"/>
        <end position="500"/>
    </location>
</feature>
<feature type="strand" evidence="20">
    <location>
        <begin position="502"/>
        <end position="509"/>
    </location>
</feature>
<feature type="strand" evidence="19">
    <location>
        <begin position="510"/>
        <end position="512"/>
    </location>
</feature>
<feature type="helix" evidence="20">
    <location>
        <begin position="514"/>
        <end position="516"/>
    </location>
</feature>
<feature type="strand" evidence="20">
    <location>
        <begin position="518"/>
        <end position="521"/>
    </location>
</feature>
<feature type="helix" evidence="20">
    <location>
        <begin position="532"/>
        <end position="536"/>
    </location>
</feature>
<feature type="turn" evidence="19">
    <location>
        <begin position="546"/>
        <end position="549"/>
    </location>
</feature>
<proteinExistence type="evidence at protein level"/>
<keyword id="KW-0002">3D-structure</keyword>
<keyword id="KW-0025">Alternative splicing</keyword>
<keyword id="KW-0156">Chromatin regulator</keyword>
<keyword id="KW-1017">Isopeptide bond</keyword>
<keyword id="KW-0479">Metal-binding</keyword>
<keyword id="KW-0539">Nucleus</keyword>
<keyword id="KW-0597">Phosphoprotein</keyword>
<keyword id="KW-1267">Proteomics identification</keyword>
<keyword id="KW-1185">Reference proteome</keyword>
<keyword id="KW-0677">Repeat</keyword>
<keyword id="KW-0804">Transcription</keyword>
<keyword id="KW-0805">Transcription regulation</keyword>
<keyword id="KW-0832">Ubl conjugation</keyword>
<keyword id="KW-0862">Zinc</keyword>
<keyword id="KW-0863">Zinc-finger</keyword>
<organism>
    <name type="scientific">Homo sapiens</name>
    <name type="common">Human</name>
    <dbReference type="NCBI Taxonomy" id="9606"/>
    <lineage>
        <taxon>Eukaryota</taxon>
        <taxon>Metazoa</taxon>
        <taxon>Chordata</taxon>
        <taxon>Craniata</taxon>
        <taxon>Vertebrata</taxon>
        <taxon>Euteleostomi</taxon>
        <taxon>Mammalia</taxon>
        <taxon>Eutheria</taxon>
        <taxon>Euarchontoglires</taxon>
        <taxon>Primates</taxon>
        <taxon>Haplorrhini</taxon>
        <taxon>Catarrhini</taxon>
        <taxon>Hominidae</taxon>
        <taxon>Homo</taxon>
    </lineage>
</organism>
<sequence length="780" mass="88337">MTESASSTSGQEFDVFSVMDWKDGVGTLPGSDLKFRVNEFGALEVITDENEMENVKKATATTTWMVPTAQEAPTSPPSSRPVFPPAYWTSPPGCPTVFSEKTGMPFRLKDPVKVEGLQFCENCCQYGNVDECLSGGNYCSQNCARHIKDKDQKEERDVEEDNEEEDPKCSRKKKPKLSLKADTKEDGEERDDEMENKQDVRILRGSQRARRKRRGDSAVLKQGLPPKGKKAWCWASYLEEEKAVAVPAKLFKEHQSFPYNKNGFKVGMKLEGVDPEHQSVYCVLTVAEVCGYRIKLHFDGYSDCYDFWVNADALDIHPVGWCEKTGHKLHPPKGYKEEEFNWQTYLKTCKAQAAPKSLFENQNITVIPSGFRVGMKLEAVDKKNPSFICVATVTDMVDNRFLVHFDNWDESYDYWCEASSPHIHPVGWCKEHRRTLITPPGYPNVKHFSWDKYLEETNSLPAPARAFKVKPPHGFQKKMKLEVVDKRNPMFIRVATVADTDDHRVKVHFDGWNNCYDYWIDADSPDIHPVGWCSKTGHPLQPPLSPLELMEASEHGGCSTPGCKGIGHFKRARHLGPHSAANCPYSEINLNKDRIFPDRLSGEMPPASPSFPRNKRTDANESSSSPEIRDQHADDVKEDFEERTESEMRTSHEARGAREEPTVQQAQRRSAVFLSFKSPIPCLPLRWEQQSKLLPTVAGIPASKVSKWSTDEVSEFIQSLPGCEEHGKVFKDEQIDGEAFLLMTQTDIVKIMSIKLGPALKIFNSILMFKAAEKNSHNEL</sequence>
<accession>Q96JM7</accession>
<accession>Q4VXE1</accession>
<accession>Q5VUM9</accession>
<accession>Q6P9B5</accession>
<evidence type="ECO:0000250" key="1">
    <source>
        <dbReference type="UniProtKB" id="Q8BLB7"/>
    </source>
</evidence>
<evidence type="ECO:0000255" key="2">
    <source>
        <dbReference type="PROSITE-ProRule" id="PRU00184"/>
    </source>
</evidence>
<evidence type="ECO:0000255" key="3">
    <source>
        <dbReference type="PROSITE-ProRule" id="PRU01143"/>
    </source>
</evidence>
<evidence type="ECO:0000256" key="4">
    <source>
        <dbReference type="SAM" id="MobiDB-lite"/>
    </source>
</evidence>
<evidence type="ECO:0000269" key="5">
    <source>
    </source>
</evidence>
<evidence type="ECO:0000269" key="6">
    <source>
    </source>
</evidence>
<evidence type="ECO:0000269" key="7">
    <source>
    </source>
</evidence>
<evidence type="ECO:0000269" key="8">
    <source>
    </source>
</evidence>
<evidence type="ECO:0000269" key="9">
    <source>
    </source>
</evidence>
<evidence type="ECO:0000269" key="10">
    <source>
    </source>
</evidence>
<evidence type="ECO:0000303" key="11">
    <source>
    </source>
</evidence>
<evidence type="ECO:0000305" key="12"/>
<evidence type="ECO:0000312" key="13">
    <source>
        <dbReference type="HGNC" id="HGNC:23035"/>
    </source>
</evidence>
<evidence type="ECO:0007744" key="14">
    <source>
    </source>
</evidence>
<evidence type="ECO:0007744" key="15">
    <source>
    </source>
</evidence>
<evidence type="ECO:0007744" key="16">
    <source>
    </source>
</evidence>
<evidence type="ECO:0007744" key="17">
    <source>
    </source>
</evidence>
<evidence type="ECO:0007744" key="18">
    <source>
    </source>
</evidence>
<evidence type="ECO:0007829" key="19">
    <source>
        <dbReference type="PDB" id="1WJQ"/>
    </source>
</evidence>
<evidence type="ECO:0007829" key="20">
    <source>
        <dbReference type="PDB" id="3UT1"/>
    </source>
</evidence>
<evidence type="ECO:0007829" key="21">
    <source>
        <dbReference type="PDB" id="4L59"/>
    </source>
</evidence>
<protein>
    <recommendedName>
        <fullName evidence="12">Lethal(3)malignant brain tumor-like protein 3</fullName>
        <shortName>H-l(3)mbt-like protein 3</shortName>
        <shortName>L(3)mbt-like protein 3</shortName>
        <shortName>L3mbt-like 3</shortName>
    </recommendedName>
    <alternativeName>
        <fullName>MBT-1</fullName>
    </alternativeName>
</protein>
<name>LMBL3_HUMAN</name>
<gene>
    <name evidence="13" type="primary">L3MBTL3</name>
    <name type="synonym">KIAA1798</name>
    <name type="synonym">MBT1</name>
</gene>
<dbReference type="EMBL" id="AB058701">
    <property type="protein sequence ID" value="BAB47427.1"/>
    <property type="status" value="ALT_INIT"/>
    <property type="molecule type" value="mRNA"/>
</dbReference>
<dbReference type="EMBL" id="AL583846">
    <property type="status" value="NOT_ANNOTATED_CDS"/>
    <property type="molecule type" value="Genomic_DNA"/>
</dbReference>
<dbReference type="EMBL" id="AL355581">
    <property type="status" value="NOT_ANNOTATED_CDS"/>
    <property type="molecule type" value="Genomic_DNA"/>
</dbReference>
<dbReference type="EMBL" id="CH471051">
    <property type="protein sequence ID" value="EAW48073.1"/>
    <property type="molecule type" value="Genomic_DNA"/>
</dbReference>
<dbReference type="EMBL" id="BC060845">
    <property type="protein sequence ID" value="AAH60845.1"/>
    <property type="molecule type" value="mRNA"/>
</dbReference>
<dbReference type="CCDS" id="CCDS34537.1">
    <molecule id="Q96JM7-1"/>
</dbReference>
<dbReference type="CCDS" id="CCDS34538.1">
    <molecule id="Q96JM7-2"/>
</dbReference>
<dbReference type="RefSeq" id="NP_001007103.1">
    <molecule id="Q96JM7-2"/>
    <property type="nucleotide sequence ID" value="NM_001007102.4"/>
</dbReference>
<dbReference type="RefSeq" id="NP_001333479.1">
    <molecule id="Q96JM7-2"/>
    <property type="nucleotide sequence ID" value="NM_001346550.2"/>
</dbReference>
<dbReference type="RefSeq" id="NP_001333480.1">
    <molecule id="Q96JM7-2"/>
    <property type="nucleotide sequence ID" value="NM_001346551.2"/>
</dbReference>
<dbReference type="RefSeq" id="NP_115814.1">
    <molecule id="Q96JM7-1"/>
    <property type="nucleotide sequence ID" value="NM_032438.4"/>
</dbReference>
<dbReference type="RefSeq" id="XP_005267218.1">
    <molecule id="Q96JM7-1"/>
    <property type="nucleotide sequence ID" value="XM_005267161.5"/>
</dbReference>
<dbReference type="RefSeq" id="XP_006715641.1">
    <molecule id="Q96JM7-1"/>
    <property type="nucleotide sequence ID" value="XM_006715578.4"/>
</dbReference>
<dbReference type="RefSeq" id="XP_011534481.1">
    <molecule id="Q96JM7-1"/>
    <property type="nucleotide sequence ID" value="XM_011536179.4"/>
</dbReference>
<dbReference type="RefSeq" id="XP_011534482.1">
    <molecule id="Q96JM7-1"/>
    <property type="nucleotide sequence ID" value="XM_011536180.3"/>
</dbReference>
<dbReference type="RefSeq" id="XP_011534483.1">
    <molecule id="Q96JM7-1"/>
    <property type="nucleotide sequence ID" value="XM_011536181.3"/>
</dbReference>
<dbReference type="RefSeq" id="XP_011534485.1">
    <property type="nucleotide sequence ID" value="XM_011536183.2"/>
</dbReference>
<dbReference type="RefSeq" id="XP_011534486.1">
    <molecule id="Q96JM7-1"/>
    <property type="nucleotide sequence ID" value="XM_011536184.3"/>
</dbReference>
<dbReference type="RefSeq" id="XP_047275364.1">
    <molecule id="Q96JM7-2"/>
    <property type="nucleotide sequence ID" value="XM_047419408.1"/>
</dbReference>
<dbReference type="RefSeq" id="XP_047275365.1">
    <molecule id="Q96JM7-2"/>
    <property type="nucleotide sequence ID" value="XM_047419409.1"/>
</dbReference>
<dbReference type="RefSeq" id="XP_047275366.1">
    <molecule id="Q96JM7-2"/>
    <property type="nucleotide sequence ID" value="XM_047419410.1"/>
</dbReference>
<dbReference type="RefSeq" id="XP_047275368.1">
    <molecule id="Q96JM7-2"/>
    <property type="nucleotide sequence ID" value="XM_047419412.1"/>
</dbReference>
<dbReference type="PDB" id="1WJQ">
    <property type="method" value="NMR"/>
    <property type="chains" value="A=469-562"/>
</dbReference>
<dbReference type="PDB" id="1WJS">
    <property type="method" value="NMR"/>
    <property type="chains" value="A=258-371"/>
</dbReference>
<dbReference type="PDB" id="3UT1">
    <property type="method" value="X-ray"/>
    <property type="resolution" value="2.05 A"/>
    <property type="chains" value="A=228-551"/>
</dbReference>
<dbReference type="PDB" id="4FL6">
    <property type="method" value="X-ray"/>
    <property type="resolution" value="2.55 A"/>
    <property type="chains" value="A/B=229-553"/>
</dbReference>
<dbReference type="PDB" id="4L59">
    <property type="method" value="X-ray"/>
    <property type="resolution" value="2.29 A"/>
    <property type="chains" value="A=228-544"/>
</dbReference>
<dbReference type="PDB" id="7RTE">
    <property type="method" value="X-ray"/>
    <property type="resolution" value="2.06 A"/>
    <property type="chains" value="D=56-69"/>
</dbReference>
<dbReference type="PDB" id="7RTI">
    <property type="method" value="X-ray"/>
    <property type="resolution" value="2.05 A"/>
    <property type="chains" value="D=56-69"/>
</dbReference>
<dbReference type="PDB" id="8Y76">
    <property type="method" value="X-ray"/>
    <property type="resolution" value="1.99 A"/>
    <property type="chains" value="A=705-773"/>
</dbReference>
<dbReference type="PDB" id="8Y77">
    <property type="method" value="X-ray"/>
    <property type="resolution" value="1.50 A"/>
    <property type="chains" value="B=705-775"/>
</dbReference>
<dbReference type="PDBsum" id="1WJQ"/>
<dbReference type="PDBsum" id="1WJS"/>
<dbReference type="PDBsum" id="3UT1"/>
<dbReference type="PDBsum" id="4FL6"/>
<dbReference type="PDBsum" id="4L59"/>
<dbReference type="PDBsum" id="7RTE"/>
<dbReference type="PDBsum" id="7RTI"/>
<dbReference type="PDBsum" id="8Y76"/>
<dbReference type="PDBsum" id="8Y77"/>
<dbReference type="SMR" id="Q96JM7"/>
<dbReference type="BioGRID" id="124091">
    <property type="interactions" value="129"/>
</dbReference>
<dbReference type="DIP" id="DIP-42798N"/>
<dbReference type="FunCoup" id="Q96JM7">
    <property type="interactions" value="2919"/>
</dbReference>
<dbReference type="IntAct" id="Q96JM7">
    <property type="interactions" value="129"/>
</dbReference>
<dbReference type="MINT" id="Q96JM7"/>
<dbReference type="STRING" id="9606.ENSP00000357118"/>
<dbReference type="BindingDB" id="Q96JM7"/>
<dbReference type="ChEMBL" id="CHEMBL1287623"/>
<dbReference type="DrugCentral" id="Q96JM7"/>
<dbReference type="GuidetoPHARMACOLOGY" id="2830"/>
<dbReference type="iPTMnet" id="Q96JM7"/>
<dbReference type="PhosphoSitePlus" id="Q96JM7"/>
<dbReference type="SwissPalm" id="Q96JM7"/>
<dbReference type="BioMuta" id="L3MBTL3"/>
<dbReference type="DMDM" id="62900619"/>
<dbReference type="jPOST" id="Q96JM7"/>
<dbReference type="MassIVE" id="Q96JM7"/>
<dbReference type="PaxDb" id="9606-ENSP00000431962"/>
<dbReference type="PeptideAtlas" id="Q96JM7"/>
<dbReference type="ProteomicsDB" id="76987">
    <molecule id="Q96JM7-1"/>
</dbReference>
<dbReference type="ProteomicsDB" id="76988">
    <molecule id="Q96JM7-2"/>
</dbReference>
<dbReference type="Pumba" id="Q96JM7"/>
<dbReference type="ABCD" id="Q96JM7">
    <property type="antibodies" value="1 sequenced antibody"/>
</dbReference>
<dbReference type="Antibodypedia" id="32840">
    <property type="antibodies" value="173 antibodies from 27 providers"/>
</dbReference>
<dbReference type="DNASU" id="84456"/>
<dbReference type="Ensembl" id="ENST00000361794.7">
    <molecule id="Q96JM7-1"/>
    <property type="protein sequence ID" value="ENSP00000354526.2"/>
    <property type="gene ID" value="ENSG00000198945.8"/>
</dbReference>
<dbReference type="Ensembl" id="ENST00000368136.3">
    <molecule id="Q96JM7-1"/>
    <property type="protein sequence ID" value="ENSP00000357118.2"/>
    <property type="gene ID" value="ENSG00000198945.8"/>
</dbReference>
<dbReference type="Ensembl" id="ENST00000368139.6">
    <molecule id="Q96JM7-2"/>
    <property type="protein sequence ID" value="ENSP00000357121.2"/>
    <property type="gene ID" value="ENSG00000198945.8"/>
</dbReference>
<dbReference type="Ensembl" id="ENST00000526019.5">
    <molecule id="Q96JM7-2"/>
    <property type="protein sequence ID" value="ENSP00000436706.1"/>
    <property type="gene ID" value="ENSG00000198945.8"/>
</dbReference>
<dbReference type="Ensembl" id="ENST00000533560.5">
    <molecule id="Q96JM7-2"/>
    <property type="protein sequence ID" value="ENSP00000437185.1"/>
    <property type="gene ID" value="ENSG00000198945.8"/>
</dbReference>
<dbReference type="GeneID" id="84456"/>
<dbReference type="KEGG" id="hsa:84456"/>
<dbReference type="MANE-Select" id="ENST00000361794.7">
    <property type="protein sequence ID" value="ENSP00000354526.2"/>
    <property type="RefSeq nucleotide sequence ID" value="NM_032438.4"/>
    <property type="RefSeq protein sequence ID" value="NP_115814.1"/>
</dbReference>
<dbReference type="UCSC" id="uc003qbt.4">
    <molecule id="Q96JM7-1"/>
    <property type="organism name" value="human"/>
</dbReference>
<dbReference type="AGR" id="HGNC:23035"/>
<dbReference type="CTD" id="84456"/>
<dbReference type="DisGeNET" id="84456"/>
<dbReference type="GeneCards" id="L3MBTL3"/>
<dbReference type="HGNC" id="HGNC:23035">
    <property type="gene designation" value="L3MBTL3"/>
</dbReference>
<dbReference type="HPA" id="ENSG00000198945">
    <property type="expression patterns" value="Low tissue specificity"/>
</dbReference>
<dbReference type="MIM" id="618844">
    <property type="type" value="gene"/>
</dbReference>
<dbReference type="neXtProt" id="NX_Q96JM7"/>
<dbReference type="OpenTargets" id="ENSG00000198945"/>
<dbReference type="PharmGKB" id="PA134943930"/>
<dbReference type="VEuPathDB" id="HostDB:ENSG00000198945"/>
<dbReference type="eggNOG" id="KOG3766">
    <property type="taxonomic scope" value="Eukaryota"/>
</dbReference>
<dbReference type="GeneTree" id="ENSGT00940000159800"/>
<dbReference type="HOGENOM" id="CLU_004064_0_1_1"/>
<dbReference type="InParanoid" id="Q96JM7"/>
<dbReference type="OMA" id="QFCENCY"/>
<dbReference type="OrthoDB" id="8188861at2759"/>
<dbReference type="PAN-GO" id="Q96JM7">
    <property type="GO annotations" value="4 GO annotations based on evolutionary models"/>
</dbReference>
<dbReference type="PhylomeDB" id="Q96JM7"/>
<dbReference type="TreeFam" id="TF316498"/>
<dbReference type="PathwayCommons" id="Q96JM7"/>
<dbReference type="SignaLink" id="Q96JM7"/>
<dbReference type="BioGRID-ORCS" id="84456">
    <property type="hits" value="27 hits in 1166 CRISPR screens"/>
</dbReference>
<dbReference type="ChiTaRS" id="L3MBTL3">
    <property type="organism name" value="human"/>
</dbReference>
<dbReference type="EvolutionaryTrace" id="Q96JM7"/>
<dbReference type="GenomeRNAi" id="84456"/>
<dbReference type="Pharos" id="Q96JM7">
    <property type="development level" value="Tchem"/>
</dbReference>
<dbReference type="PRO" id="PR:Q96JM7"/>
<dbReference type="Proteomes" id="UP000005640">
    <property type="component" value="Chromosome 6"/>
</dbReference>
<dbReference type="RNAct" id="Q96JM7">
    <property type="molecule type" value="protein"/>
</dbReference>
<dbReference type="Bgee" id="ENSG00000198945">
    <property type="expression patterns" value="Expressed in calcaneal tendon and 145 other cell types or tissues"/>
</dbReference>
<dbReference type="ExpressionAtlas" id="Q96JM7">
    <property type="expression patterns" value="baseline and differential"/>
</dbReference>
<dbReference type="GO" id="GO:0005730">
    <property type="term" value="C:nucleolus"/>
    <property type="evidence" value="ECO:0000314"/>
    <property type="project" value="HPA"/>
</dbReference>
<dbReference type="GO" id="GO:0005654">
    <property type="term" value="C:nucleoplasm"/>
    <property type="evidence" value="ECO:0000314"/>
    <property type="project" value="HPA"/>
</dbReference>
<dbReference type="GO" id="GO:0005634">
    <property type="term" value="C:nucleus"/>
    <property type="evidence" value="ECO:0000314"/>
    <property type="project" value="UniProtKB"/>
</dbReference>
<dbReference type="GO" id="GO:0003682">
    <property type="term" value="F:chromatin binding"/>
    <property type="evidence" value="ECO:0000314"/>
    <property type="project" value="UniProtKB"/>
</dbReference>
<dbReference type="GO" id="GO:0042393">
    <property type="term" value="F:histone binding"/>
    <property type="evidence" value="ECO:0000318"/>
    <property type="project" value="GO_Central"/>
</dbReference>
<dbReference type="GO" id="GO:0042802">
    <property type="term" value="F:identical protein binding"/>
    <property type="evidence" value="ECO:0000353"/>
    <property type="project" value="IntAct"/>
</dbReference>
<dbReference type="GO" id="GO:0140034">
    <property type="term" value="F:methylation-dependent protein binding"/>
    <property type="evidence" value="ECO:0000353"/>
    <property type="project" value="UniProtKB"/>
</dbReference>
<dbReference type="GO" id="GO:0008270">
    <property type="term" value="F:zinc ion binding"/>
    <property type="evidence" value="ECO:0007669"/>
    <property type="project" value="UniProtKB-KW"/>
</dbReference>
<dbReference type="GO" id="GO:0006325">
    <property type="term" value="P:chromatin organization"/>
    <property type="evidence" value="ECO:0007669"/>
    <property type="project" value="UniProtKB-KW"/>
</dbReference>
<dbReference type="GO" id="GO:0043249">
    <property type="term" value="P:erythrocyte maturation"/>
    <property type="evidence" value="ECO:0007669"/>
    <property type="project" value="Ensembl"/>
</dbReference>
<dbReference type="GO" id="GO:0030851">
    <property type="term" value="P:granulocyte differentiation"/>
    <property type="evidence" value="ECO:0007669"/>
    <property type="project" value="Ensembl"/>
</dbReference>
<dbReference type="GO" id="GO:0030225">
    <property type="term" value="P:macrophage differentiation"/>
    <property type="evidence" value="ECO:0007669"/>
    <property type="project" value="Ensembl"/>
</dbReference>
<dbReference type="GO" id="GO:0045892">
    <property type="term" value="P:negative regulation of DNA-templated transcription"/>
    <property type="evidence" value="ECO:0000315"/>
    <property type="project" value="UniProtKB"/>
</dbReference>
<dbReference type="GO" id="GO:0160217">
    <property type="term" value="P:negative regulation of transcription initiation-coupled chromatin remodeling"/>
    <property type="evidence" value="ECO:0000314"/>
    <property type="project" value="UniProtKB"/>
</dbReference>
<dbReference type="GO" id="GO:2000060">
    <property type="term" value="P:positive regulation of ubiquitin-dependent protein catabolic process"/>
    <property type="evidence" value="ECO:0000315"/>
    <property type="project" value="UniProtKB"/>
</dbReference>
<dbReference type="CDD" id="cd20132">
    <property type="entry name" value="MBT_L3MBTL3_rpt1"/>
    <property type="match status" value="1"/>
</dbReference>
<dbReference type="CDD" id="cd20135">
    <property type="entry name" value="MBT_L3MBTL3_rpt2"/>
    <property type="match status" value="1"/>
</dbReference>
<dbReference type="CDD" id="cd20138">
    <property type="entry name" value="MBT_L3MBTL3_rpt3"/>
    <property type="match status" value="1"/>
</dbReference>
<dbReference type="CDD" id="cd09582">
    <property type="entry name" value="SAM_Scm-like-3MBT3_4"/>
    <property type="match status" value="1"/>
</dbReference>
<dbReference type="FunFam" id="2.30.30.140:FF:000007">
    <property type="entry name" value="Lethal(3)malignant brain tumor-like protein 1"/>
    <property type="match status" value="2"/>
</dbReference>
<dbReference type="FunFam" id="1.10.150.50:FF:000035">
    <property type="entry name" value="lethal(3)malignant brain tumor-like protein 3 isoform X2"/>
    <property type="match status" value="1"/>
</dbReference>
<dbReference type="Gene3D" id="2.30.30.140">
    <property type="match status" value="3"/>
</dbReference>
<dbReference type="Gene3D" id="1.10.150.50">
    <property type="entry name" value="Transcription Factor, Ets-1"/>
    <property type="match status" value="1"/>
</dbReference>
<dbReference type="InterPro" id="IPR004092">
    <property type="entry name" value="Mbt"/>
</dbReference>
<dbReference type="InterPro" id="IPR050548">
    <property type="entry name" value="PcG_chromatin_remod_factors"/>
</dbReference>
<dbReference type="InterPro" id="IPR001660">
    <property type="entry name" value="SAM"/>
</dbReference>
<dbReference type="InterPro" id="IPR013761">
    <property type="entry name" value="SAM/pointed_sf"/>
</dbReference>
<dbReference type="InterPro" id="IPR002515">
    <property type="entry name" value="Znf_C2H2C"/>
</dbReference>
<dbReference type="PANTHER" id="PTHR12247:SF72">
    <property type="entry name" value="LETHAL(3)MALIGNANT BRAIN TUMOR-LIKE PROTEIN 3"/>
    <property type="match status" value="1"/>
</dbReference>
<dbReference type="PANTHER" id="PTHR12247">
    <property type="entry name" value="POLYCOMB GROUP PROTEIN"/>
    <property type="match status" value="1"/>
</dbReference>
<dbReference type="Pfam" id="PF02820">
    <property type="entry name" value="MBT"/>
    <property type="match status" value="3"/>
</dbReference>
<dbReference type="Pfam" id="PF00536">
    <property type="entry name" value="SAM_1"/>
    <property type="match status" value="1"/>
</dbReference>
<dbReference type="SMART" id="SM00561">
    <property type="entry name" value="MBT"/>
    <property type="match status" value="3"/>
</dbReference>
<dbReference type="SMART" id="SM00454">
    <property type="entry name" value="SAM"/>
    <property type="match status" value="1"/>
</dbReference>
<dbReference type="SUPFAM" id="SSF47769">
    <property type="entry name" value="SAM/Pointed domain"/>
    <property type="match status" value="1"/>
</dbReference>
<dbReference type="SUPFAM" id="SSF63748">
    <property type="entry name" value="Tudor/PWWP/MBT"/>
    <property type="match status" value="3"/>
</dbReference>
<dbReference type="PROSITE" id="PS51079">
    <property type="entry name" value="MBT"/>
    <property type="match status" value="3"/>
</dbReference>
<dbReference type="PROSITE" id="PS50105">
    <property type="entry name" value="SAM_DOMAIN"/>
    <property type="match status" value="1"/>
</dbReference>
<dbReference type="PROSITE" id="PS51802">
    <property type="entry name" value="ZF_CCHHC"/>
    <property type="match status" value="1"/>
</dbReference>
<comment type="function">
    <text evidence="1 7 8 9">Is a negative regulator of Notch target genes expression, required for RBPJ-mediated transcriptional repression (PubMed:29030483). It recruits KDM1A to Notch-responsive elements and promotes KDM1A-mediated H3K4me demethylation (PubMed:29030483). Involved in the regulation of ubiquitin-dependent degradation of a set of methylated non-histone proteins, including SOX2, DNMT1 and E2F1. It acts as an adapter recruiting the CRL4-DCAF5 E3 ubiquitin ligase complex to methylated target proteins (PubMed:29691401, PubMed:30442713). Required for normal maturation of myeloid progenitor cells (By similarity).</text>
</comment>
<comment type="subunit">
    <text evidence="1 7 8 9 10">Interacts with RNF2 (By similarity). Interacts (via SAM domain) with SAMD1 (via SAM domain); the interaction mediates L3MBTL3 binding to chromatin (PubMed:33980486). Interacts with RBPJ; the interaction is required for L3MBTL3 localization to chromatin and is impaired by Notch-derived peptides containing the intracellular domain (NICD) (PubMed:29030483). Interacts (via SAM domain) with KDM1A (PubMed:29030483). Interacts with DCAF5 (PubMed:29691401). Interacts with DNMT1 (PubMed:29691401). Interacts with E2F1 (PubMed:29691401). Interacts with SOX2 (PubMed:30442713). Interacts with SFMBT1 (By similarity).</text>
</comment>
<comment type="interaction">
    <interactant intactId="EBI-2686809">
        <id>Q96JM7</id>
    </interactant>
    <interactant intactId="EBI-6425205">
        <id>Q9NWX5</id>
        <label>ASB6</label>
    </interactant>
    <organismsDiffer>false</organismsDiffer>
    <experiments>3</experiments>
</comment>
<comment type="interaction">
    <interactant intactId="EBI-2686809">
        <id>Q96JM7</id>
    </interactant>
    <interactant intactId="EBI-744695">
        <id>Q8N9N5</id>
        <label>BANP</label>
    </interactant>
    <organismsDiffer>false</organismsDiffer>
    <experiments>4</experiments>
</comment>
<comment type="interaction">
    <interactant intactId="EBI-2686809">
        <id>Q96JM7</id>
    </interactant>
    <interactant intactId="EBI-358049">
        <id>Q13895</id>
        <label>BYSL</label>
    </interactant>
    <organismsDiffer>false</organismsDiffer>
    <experiments>5</experiments>
</comment>
<comment type="interaction">
    <interactant intactId="EBI-2686809">
        <id>Q96JM7</id>
    </interactant>
    <interactant intactId="EBI-3253159">
        <id>Q96JK2</id>
        <label>DCAF5</label>
    </interactant>
    <organismsDiffer>false</organismsDiffer>
    <experiments>4</experiments>
</comment>
<comment type="interaction">
    <interactant intactId="EBI-2686809">
        <id>Q96JM7</id>
    </interactant>
    <interactant intactId="EBI-350322">
        <id>Q16531</id>
        <label>DDB1</label>
    </interactant>
    <organismsDiffer>false</organismsDiffer>
    <experiments>2</experiments>
</comment>
<comment type="interaction">
    <interactant intactId="EBI-2686809">
        <id>Q96JM7</id>
    </interactant>
    <interactant intactId="EBI-719459">
        <id>P26358</id>
        <label>DNMT1</label>
    </interactant>
    <organismsDiffer>false</organismsDiffer>
    <experiments>11</experiments>
</comment>
<comment type="interaction">
    <interactant intactId="EBI-2686809">
        <id>Q96JM7</id>
    </interactant>
    <interactant intactId="EBI-448924">
        <id>Q01094</id>
        <label>E2F1</label>
    </interactant>
    <organismsDiffer>false</organismsDiffer>
    <experiments>2</experiments>
</comment>
<comment type="interaction">
    <interactant intactId="EBI-2686809">
        <id>Q96JM7</id>
    </interactant>
    <interactant intactId="EBI-765551">
        <id>O00716</id>
        <label>E2F3</label>
    </interactant>
    <organismsDiffer>false</organismsDiffer>
    <experiments>3</experiments>
</comment>
<comment type="interaction">
    <interactant intactId="EBI-2686809">
        <id>Q96JM7</id>
    </interactant>
    <interactant intactId="EBI-2686809">
        <id>Q96JM7</id>
        <label>L3MBTL3</label>
    </interactant>
    <organismsDiffer>false</organismsDiffer>
    <experiments>3</experiments>
</comment>
<comment type="interaction">
    <interactant intactId="EBI-2686809">
        <id>Q96JM7</id>
    </interactant>
    <interactant intactId="EBI-372521">
        <id>Q9Y4Z0</id>
        <label>LSM4</label>
    </interactant>
    <organismsDiffer>false</organismsDiffer>
    <experiments>3</experiments>
</comment>
<comment type="interaction">
    <interactant intactId="EBI-2686809">
        <id>Q96JM7</id>
    </interactant>
    <interactant intactId="EBI-713568">
        <id>P45984</id>
        <label>MAPK9</label>
    </interactant>
    <organismsDiffer>false</organismsDiffer>
    <experiments>3</experiments>
</comment>
<comment type="interaction">
    <interactant intactId="EBI-2686809">
        <id>Q96JM7</id>
    </interactant>
    <interactant intactId="EBI-399246">
        <id>Q9UBU8</id>
        <label>MORF4L1</label>
    </interactant>
    <organismsDiffer>false</organismsDiffer>
    <experiments>3</experiments>
</comment>
<comment type="interaction">
    <interactant intactId="EBI-2686809">
        <id>Q96JM7</id>
    </interactant>
    <interactant intactId="EBI-399257">
        <id>Q15014</id>
        <label>MORF4L2</label>
    </interactant>
    <organismsDiffer>false</organismsDiffer>
    <experiments>3</experiments>
</comment>
<comment type="interaction">
    <interactant intactId="EBI-2686809">
        <id>Q96JM7</id>
    </interactant>
    <interactant intactId="EBI-10311409">
        <id>Q9NPG2</id>
        <label>NGB</label>
    </interactant>
    <organismsDiffer>false</organismsDiffer>
    <experiments>3</experiments>
</comment>
<comment type="interaction">
    <interactant intactId="EBI-2686809">
        <id>Q96JM7</id>
    </interactant>
    <interactant intactId="EBI-10281601">
        <id>Q9UMX2</id>
        <label>OAZ3</label>
    </interactant>
    <organismsDiffer>false</organismsDiffer>
    <experiments>3</experiments>
</comment>
<comment type="interaction">
    <interactant intactId="EBI-2686809">
        <id>Q96JM7</id>
    </interactant>
    <interactant intactId="EBI-2622029">
        <id>P18545</id>
        <label>PDE6G</label>
    </interactant>
    <organismsDiffer>false</organismsDiffer>
    <experiments>3</experiments>
</comment>
<comment type="interaction">
    <interactant intactId="EBI-2686809">
        <id>Q96JM7</id>
    </interactant>
    <interactant intactId="EBI-713786">
        <id>Q8IXK0</id>
        <label>PHC2</label>
    </interactant>
    <organismsDiffer>false</organismsDiffer>
    <experiments>6</experiments>
</comment>
<comment type="interaction">
    <interactant intactId="EBI-2686809">
        <id>Q96JM7</id>
    </interactant>
    <interactant intactId="EBI-749096">
        <id>Q8N381</id>
        <label>PIK3R3</label>
    </interactant>
    <organismsDiffer>false</organismsDiffer>
    <experiments>3</experiments>
</comment>
<comment type="interaction">
    <interactant intactId="EBI-2686809">
        <id>Q96JM7</id>
    </interactant>
    <interactant intactId="EBI-745767">
        <id>Q96S99</id>
        <label>PLEKHF1</label>
    </interactant>
    <organismsDiffer>false</organismsDiffer>
    <experiments>3</experiments>
</comment>
<comment type="interaction">
    <interactant intactId="EBI-2686809">
        <id>Q96JM7</id>
    </interactant>
    <interactant intactId="EBI-742388">
        <id>Q9H8W4</id>
        <label>PLEKHF2</label>
    </interactant>
    <organismsDiffer>false</organismsDiffer>
    <experiments>3</experiments>
</comment>
<comment type="interaction">
    <interactant intactId="EBI-2686809">
        <id>Q96JM7</id>
    </interactant>
    <interactant intactId="EBI-359527">
        <id>P62875</id>
        <label>POLR2L</label>
    </interactant>
    <organismsDiffer>false</organismsDiffer>
    <experiments>3</experiments>
</comment>
<comment type="interaction">
    <interactant intactId="EBI-2686809">
        <id>Q96JM7</id>
    </interactant>
    <interactant intactId="EBI-1181405">
        <id>Q13131</id>
        <label>PRKAA1</label>
    </interactant>
    <organismsDiffer>false</organismsDiffer>
    <experiments>3</experiments>
</comment>
<comment type="interaction">
    <interactant intactId="EBI-2686809">
        <id>Q96JM7</id>
    </interactant>
    <interactant intactId="EBI-1383852">
        <id>P54646</id>
        <label>PRKAA2</label>
    </interactant>
    <organismsDiffer>false</organismsDiffer>
    <experiments>3</experiments>
</comment>
<comment type="interaction">
    <interactant intactId="EBI-2686809">
        <id>Q96JM7</id>
    </interactant>
    <interactant intactId="EBI-372475">
        <id>P14678-2</id>
        <label>SNRPB</label>
    </interactant>
    <organismsDiffer>false</organismsDiffer>
    <experiments>3</experiments>
</comment>
<comment type="interaction">
    <interactant intactId="EBI-2686809">
        <id>Q96JM7</id>
    </interactant>
    <interactant intactId="EBI-751145">
        <id>P23497</id>
        <label>SP100</label>
    </interactant>
    <organismsDiffer>false</organismsDiffer>
    <experiments>3</experiments>
</comment>
<comment type="interaction">
    <interactant intactId="EBI-2686809">
        <id>Q96JM7</id>
    </interactant>
    <interactant intactId="EBI-10175576">
        <id>G2XKQ0</id>
        <label>SUMO1P1</label>
    </interactant>
    <organismsDiffer>false</organismsDiffer>
    <experiments>3</experiments>
</comment>
<comment type="interaction">
    <interactant intactId="EBI-2686809">
        <id>Q96JM7</id>
    </interactant>
    <interactant intactId="EBI-286285">
        <id>P10827</id>
        <label>THRA</label>
    </interactant>
    <organismsDiffer>false</organismsDiffer>
    <experiments>3</experiments>
</comment>
<comment type="interaction">
    <interactant intactId="EBI-2686809">
        <id>Q96JM7</id>
    </interactant>
    <interactant intactId="EBI-948354">
        <id>Q6DKK2</id>
        <label>TTC19</label>
    </interactant>
    <organismsDiffer>false</organismsDiffer>
    <experiments>3</experiments>
</comment>
<comment type="interaction">
    <interactant intactId="EBI-11985629">
        <id>Q96JM7-2</id>
    </interactant>
    <interactant intactId="EBI-930964">
        <id>P54253</id>
        <label>ATXN1</label>
    </interactant>
    <organismsDiffer>false</organismsDiffer>
    <experiments>6</experiments>
</comment>
<comment type="interaction">
    <interactant intactId="EBI-11985629">
        <id>Q96JM7-2</id>
    </interactant>
    <interactant intactId="EBI-16429704">
        <id>A0A0S2Z5G4</id>
        <label>BANP</label>
    </interactant>
    <organismsDiffer>false</organismsDiffer>
    <experiments>3</experiments>
</comment>
<comment type="interaction">
    <interactant intactId="EBI-11985629">
        <id>Q96JM7-2</id>
    </interactant>
    <interactant intactId="EBI-358049">
        <id>Q13895</id>
        <label>BYSL</label>
    </interactant>
    <organismsDiffer>false</organismsDiffer>
    <experiments>3</experiments>
</comment>
<comment type="interaction">
    <interactant intactId="EBI-11985629">
        <id>Q96JM7-2</id>
    </interactant>
    <interactant intactId="EBI-11955105">
        <id>Q9BXJ3</id>
        <label>C1QTNF4</label>
    </interactant>
    <organismsDiffer>false</organismsDiffer>
    <experiments>3</experiments>
</comment>
<comment type="interaction">
    <interactant intactId="EBI-11985629">
        <id>Q96JM7-2</id>
    </interactant>
    <interactant intactId="EBI-2872414">
        <id>Q8IUI8</id>
        <label>CRLF3</label>
    </interactant>
    <organismsDiffer>false</organismsDiffer>
    <experiments>3</experiments>
</comment>
<comment type="interaction">
    <interactant intactId="EBI-11985629">
        <id>Q96JM7-2</id>
    </interactant>
    <interactant intactId="EBI-25840379">
        <id>Q14203-5</id>
        <label>DCTN1</label>
    </interactant>
    <organismsDiffer>false</organismsDiffer>
    <experiments>3</experiments>
</comment>
<comment type="interaction">
    <interactant intactId="EBI-11985629">
        <id>Q96JM7-2</id>
    </interactant>
    <interactant intactId="EBI-745369">
        <id>Q9H4E7</id>
        <label>DEF6</label>
    </interactant>
    <organismsDiffer>false</organismsDiffer>
    <experiments>3</experiments>
</comment>
<comment type="interaction">
    <interactant intactId="EBI-11985629">
        <id>Q96JM7-2</id>
    </interactant>
    <interactant intactId="EBI-11526128">
        <id>Q8NFF5-2</id>
        <label>FLAD1</label>
    </interactant>
    <organismsDiffer>false</organismsDiffer>
    <experiments>3</experiments>
</comment>
<comment type="interaction">
    <interactant intactId="EBI-11985629">
        <id>Q96JM7-2</id>
    </interactant>
    <interactant intactId="EBI-10242151">
        <id>Q53EP0-3</id>
        <label>FNDC3B</label>
    </interactant>
    <organismsDiffer>false</organismsDiffer>
    <experiments>3</experiments>
</comment>
<comment type="interaction">
    <interactant intactId="EBI-11985629">
        <id>Q96JM7-2</id>
    </interactant>
    <interactant intactId="EBI-1052570">
        <id>O95995</id>
        <label>GAS8</label>
    </interactant>
    <organismsDiffer>false</organismsDiffer>
    <experiments>3</experiments>
</comment>
<comment type="interaction">
    <interactant intactId="EBI-11985629">
        <id>Q96JM7-2</id>
    </interactant>
    <interactant intactId="EBI-7116203">
        <id>O75031</id>
        <label>HSF2BP</label>
    </interactant>
    <organismsDiffer>false</organismsDiffer>
    <experiments>3</experiments>
</comment>
<comment type="interaction">
    <interactant intactId="EBI-11985629">
        <id>Q96JM7-2</id>
    </interactant>
    <interactant intactId="EBI-466029">
        <id>P42858</id>
        <label>HTT</label>
    </interactant>
    <organismsDiffer>false</organismsDiffer>
    <experiments>3</experiments>
</comment>
<comment type="interaction">
    <interactant intactId="EBI-11985629">
        <id>Q96JM7-2</id>
    </interactant>
    <interactant intactId="EBI-17178971">
        <id>Q14005-2</id>
        <label>IL16</label>
    </interactant>
    <organismsDiffer>false</organismsDiffer>
    <experiments>3</experiments>
</comment>
<comment type="interaction">
    <interactant intactId="EBI-11985629">
        <id>Q96JM7-2</id>
    </interactant>
    <interactant intactId="EBI-2556193">
        <id>Q63ZY3</id>
        <label>KANK2</label>
    </interactant>
    <organismsDiffer>false</organismsDiffer>
    <experiments>3</experiments>
</comment>
<comment type="interaction">
    <interactant intactId="EBI-11985629">
        <id>Q96JM7-2</id>
    </interactant>
    <interactant intactId="EBI-11985629">
        <id>Q96JM7-2</id>
        <label>L3MBTL3</label>
    </interactant>
    <organismsDiffer>false</organismsDiffer>
    <experiments>3</experiments>
</comment>
<comment type="interaction">
    <interactant intactId="EBI-11985629">
        <id>Q96JM7-2</id>
    </interactant>
    <interactant intactId="EBI-2798728">
        <id>P61968</id>
        <label>LMO4</label>
    </interactant>
    <organismsDiffer>false</organismsDiffer>
    <experiments>3</experiments>
</comment>
<comment type="interaction">
    <interactant intactId="EBI-11985629">
        <id>Q96JM7-2</id>
    </interactant>
    <interactant intactId="EBI-713568">
        <id>P45984</id>
        <label>MAPK9</label>
    </interactant>
    <organismsDiffer>false</organismsDiffer>
    <experiments>3</experiments>
</comment>
<comment type="interaction">
    <interactant intactId="EBI-11985629">
        <id>Q96JM7-2</id>
    </interactant>
    <interactant intactId="EBI-1048159">
        <id>P55081</id>
        <label>MFAP1</label>
    </interactant>
    <organismsDiffer>false</organismsDiffer>
    <experiments>3</experiments>
</comment>
<comment type="interaction">
    <interactant intactId="EBI-11985629">
        <id>Q96JM7-2</id>
    </interactant>
    <interactant intactId="EBI-10288852">
        <id>Q9UBU8-2</id>
        <label>MORF4L1</label>
    </interactant>
    <organismsDiffer>false</organismsDiffer>
    <experiments>3</experiments>
</comment>
<comment type="interaction">
    <interactant intactId="EBI-11985629">
        <id>Q96JM7-2</id>
    </interactant>
    <interactant intactId="EBI-399257">
        <id>Q15014</id>
        <label>MORF4L2</label>
    </interactant>
    <organismsDiffer>false</organismsDiffer>
    <experiments>3</experiments>
</comment>
<comment type="interaction">
    <interactant intactId="EBI-11985629">
        <id>Q96JM7-2</id>
    </interactant>
    <interactant intactId="EBI-10311409">
        <id>Q9NPG2</id>
        <label>NGB</label>
    </interactant>
    <organismsDiffer>false</organismsDiffer>
    <experiments>3</experiments>
</comment>
<comment type="interaction">
    <interactant intactId="EBI-11985629">
        <id>Q96JM7-2</id>
    </interactant>
    <interactant intactId="EBI-11742836">
        <id>Q16656-4</id>
        <label>NRF1</label>
    </interactant>
    <organismsDiffer>false</organismsDiffer>
    <experiments>3</experiments>
</comment>
<comment type="interaction">
    <interactant intactId="EBI-11985629">
        <id>Q96JM7-2</id>
    </interactant>
    <interactant intactId="EBI-741158">
        <id>Q96HA8</id>
        <label>NTAQ1</label>
    </interactant>
    <organismsDiffer>false</organismsDiffer>
    <experiments>3</experiments>
</comment>
<comment type="interaction">
    <interactant intactId="EBI-11985629">
        <id>Q96JM7-2</id>
    </interactant>
    <interactant intactId="EBI-745085">
        <id>Q96BD5</id>
        <label>PHF21A</label>
    </interactant>
    <organismsDiffer>false</organismsDiffer>
    <experiments>3</experiments>
</comment>
<comment type="interaction">
    <interactant intactId="EBI-11985629">
        <id>Q96JM7-2</id>
    </interactant>
    <interactant intactId="EBI-79893">
        <id>Q92569</id>
        <label>PIK3R3</label>
    </interactant>
    <organismsDiffer>false</organismsDiffer>
    <experiments>3</experiments>
</comment>
<comment type="interaction">
    <interactant intactId="EBI-11985629">
        <id>Q96JM7-2</id>
    </interactant>
    <interactant intactId="EBI-745767">
        <id>Q96S99</id>
        <label>PLEKHF1</label>
    </interactant>
    <organismsDiffer>false</organismsDiffer>
    <experiments>3</experiments>
</comment>
<comment type="interaction">
    <interactant intactId="EBI-11985629">
        <id>Q96JM7-2</id>
    </interactant>
    <interactant intactId="EBI-742388">
        <id>Q9H8W4</id>
        <label>PLEKHF2</label>
    </interactant>
    <organismsDiffer>false</organismsDiffer>
    <experiments>3</experiments>
</comment>
<comment type="interaction">
    <interactant intactId="EBI-11985629">
        <id>Q96JM7-2</id>
    </interactant>
    <interactant intactId="EBI-741582">
        <id>O60568</id>
        <label>PLOD3</label>
    </interactant>
    <organismsDiffer>false</organismsDiffer>
    <experiments>3</experiments>
</comment>
<comment type="interaction">
    <interactant intactId="EBI-11985629">
        <id>Q96JM7-2</id>
    </interactant>
    <interactant intactId="EBI-50433196">
        <id>A0A6Q8PF08</id>
        <label>PMP22</label>
    </interactant>
    <organismsDiffer>false</organismsDiffer>
    <experiments>3</experiments>
</comment>
<comment type="interaction">
    <interactant intactId="EBI-11985629">
        <id>Q96JM7-2</id>
    </interactant>
    <interactant intactId="EBI-712311">
        <id>P67775</id>
        <label>PPP2CA</label>
    </interactant>
    <organismsDiffer>false</organismsDiffer>
    <experiments>3</experiments>
</comment>
<comment type="interaction">
    <interactant intactId="EBI-11985629">
        <id>Q96JM7-2</id>
    </interactant>
    <interactant intactId="EBI-1383852">
        <id>P54646</id>
        <label>PRKAA2</label>
    </interactant>
    <organismsDiffer>false</organismsDiffer>
    <experiments>3</experiments>
</comment>
<comment type="interaction">
    <interactant intactId="EBI-11985629">
        <id>Q96JM7-2</id>
    </interactant>
    <interactant intactId="EBI-413628">
        <id>P63000</id>
        <label>RAC1</label>
    </interactant>
    <organismsDiffer>false</organismsDiffer>
    <experiments>3</experiments>
</comment>
<comment type="interaction">
    <interactant intactId="EBI-11985629">
        <id>Q96JM7-2</id>
    </interactant>
    <interactant intactId="EBI-2367123">
        <id>O94955</id>
        <label>RHOBTB3</label>
    </interactant>
    <organismsDiffer>false</organismsDiffer>
    <experiments>3</experiments>
</comment>
<comment type="interaction">
    <interactant intactId="EBI-11985629">
        <id>Q96JM7-2</id>
    </interactant>
    <interactant intactId="EBI-12025260">
        <id>Q5VUG0</id>
        <label>SFMBT2</label>
    </interactant>
    <organismsDiffer>false</organismsDiffer>
    <experiments>3</experiments>
</comment>
<comment type="interaction">
    <interactant intactId="EBI-11985629">
        <id>Q96JM7-2</id>
    </interactant>
    <interactant intactId="EBI-985879">
        <id>P37840</id>
        <label>SNCA</label>
    </interactant>
    <organismsDiffer>false</organismsDiffer>
    <experiments>3</experiments>
</comment>
<comment type="interaction">
    <interactant intactId="EBI-11985629">
        <id>Q96JM7-2</id>
    </interactant>
    <interactant intactId="EBI-990792">
        <id>P00441</id>
        <label>SOD1</label>
    </interactant>
    <organismsDiffer>false</organismsDiffer>
    <experiments>3</experiments>
</comment>
<comment type="interaction">
    <interactant intactId="EBI-11985629">
        <id>Q96JM7-2</id>
    </interactant>
    <interactant intactId="EBI-12023934">
        <id>Q5MJ10</id>
        <label>SPANXN2</label>
    </interactant>
    <organismsDiffer>false</organismsDiffer>
    <experiments>3</experiments>
</comment>
<comment type="interaction">
    <interactant intactId="EBI-11985629">
        <id>Q96JM7-2</id>
    </interactant>
    <interactant intactId="EBI-740595">
        <id>Q9UMX1</id>
        <label>SUFU</label>
    </interactant>
    <organismsDiffer>false</organismsDiffer>
    <experiments>3</experiments>
</comment>
<comment type="interaction">
    <interactant intactId="EBI-11985629">
        <id>Q96JM7-2</id>
    </interactant>
    <interactant intactId="EBI-372899">
        <id>Q13148</id>
        <label>TARDBP</label>
    </interactant>
    <organismsDiffer>false</organismsDiffer>
    <experiments>6</experiments>
</comment>
<comment type="interaction">
    <interactant intactId="EBI-11985629">
        <id>Q96JM7-2</id>
    </interactant>
    <interactant intactId="EBI-1644036">
        <id>Q86TI0</id>
        <label>TBC1D1</label>
    </interactant>
    <organismsDiffer>false</organismsDiffer>
    <experiments>3</experiments>
</comment>
<comment type="interaction">
    <interactant intactId="EBI-11985629">
        <id>Q96JM7-2</id>
    </interactant>
    <interactant intactId="EBI-11955057">
        <id>Q8N8B7-2</id>
        <label>TCEANC</label>
    </interactant>
    <organismsDiffer>false</organismsDiffer>
    <experiments>3</experiments>
</comment>
<comment type="interaction">
    <interactant intactId="EBI-11985629">
        <id>Q96JM7-2</id>
    </interactant>
    <interactant intactId="EBI-765817">
        <id>Q9Y228</id>
        <label>TRAF3IP3</label>
    </interactant>
    <organismsDiffer>false</organismsDiffer>
    <experiments>5</experiments>
</comment>
<comment type="interaction">
    <interactant intactId="EBI-11985629">
        <id>Q96JM7-2</id>
    </interactant>
    <interactant intactId="EBI-8994397">
        <id>Q5T7W7</id>
        <label>TSTD2</label>
    </interactant>
    <organismsDiffer>false</organismsDiffer>
    <experiments>3</experiments>
</comment>
<comment type="interaction">
    <interactant intactId="EBI-11985629">
        <id>Q96JM7-2</id>
    </interactant>
    <interactant intactId="EBI-948354">
        <id>Q6DKK2</id>
        <label>TTC19</label>
    </interactant>
    <organismsDiffer>false</organismsDiffer>
    <experiments>3</experiments>
</comment>
<comment type="interaction">
    <interactant intactId="EBI-11985629">
        <id>Q96JM7-2</id>
    </interactant>
    <interactant intactId="EBI-714860">
        <id>P09936</id>
        <label>UCHL1</label>
    </interactant>
    <organismsDiffer>false</organismsDiffer>
    <experiments>3</experiments>
</comment>
<comment type="interaction">
    <interactant intactId="EBI-11985629">
        <id>Q96JM7-2</id>
    </interactant>
    <interactant intactId="EBI-1052596">
        <id>P31930</id>
        <label>UQCRC1</label>
    </interactant>
    <organismsDiffer>false</organismsDiffer>
    <experiments>3</experiments>
</comment>
<comment type="interaction">
    <interactant intactId="EBI-11985629">
        <id>Q96JM7-2</id>
    </interactant>
    <interactant intactId="EBI-357430">
        <id>P61758</id>
        <label>VBP1</label>
    </interactant>
    <organismsDiffer>false</organismsDiffer>
    <experiments>3</experiments>
</comment>
<comment type="interaction">
    <interactant intactId="EBI-11985629">
        <id>Q96JM7-2</id>
    </interactant>
    <interactant intactId="EBI-16429747">
        <id>A0A0S2Z6A9</id>
        <label>ZCWPW1</label>
    </interactant>
    <organismsDiffer>false</organismsDiffer>
    <experiments>3</experiments>
</comment>
<comment type="interaction">
    <interactant intactId="EBI-11985629">
        <id>Q96JM7-2</id>
    </interactant>
    <interactant intactId="EBI-16429732">
        <id>Q9H0M4-4</id>
        <label>ZCWPW1</label>
    </interactant>
    <organismsDiffer>false</organismsDiffer>
    <experiments>3</experiments>
</comment>
<comment type="interaction">
    <interactant intactId="EBI-11985629">
        <id>Q96JM7-2</id>
    </interactant>
    <interactant intactId="EBI-7254550">
        <id>P36508</id>
        <label>ZNF76</label>
    </interactant>
    <organismsDiffer>false</organismsDiffer>
    <experiments>3</experiments>
</comment>
<comment type="subcellular location">
    <subcellularLocation>
        <location evidence="10">Nucleus</location>
    </subcellularLocation>
</comment>
<comment type="alternative products">
    <event type="alternative splicing"/>
    <isoform>
        <id>Q96JM7-1</id>
        <name>1</name>
        <sequence type="displayed"/>
    </isoform>
    <isoform>
        <id>Q96JM7-2</id>
        <name>2</name>
        <sequence type="described" ref="VSP_013508"/>
    </isoform>
</comment>
<comment type="sequence caution" evidence="12">
    <conflict type="erroneous initiation">
        <sequence resource="EMBL-CDS" id="BAB47427"/>
    </conflict>
    <text>Extended N-terminus.</text>
</comment>
<reference key="1">
    <citation type="journal article" date="2001" name="DNA Res.">
        <title>Prediction of the coding sequences of unidentified human genes. XX. The complete sequences of 100 new cDNA clones from brain which code for large proteins in vitro.</title>
        <authorList>
            <person name="Nagase T."/>
            <person name="Nakayama M."/>
            <person name="Nakajima D."/>
            <person name="Kikuno R."/>
            <person name="Ohara O."/>
        </authorList>
    </citation>
    <scope>NUCLEOTIDE SEQUENCE [LARGE SCALE MRNA] (ISOFORM 1)</scope>
    <scope>VARIANT ASN-183</scope>
    <source>
        <tissue>Brain</tissue>
    </source>
</reference>
<reference key="2">
    <citation type="journal article" date="2003" name="Nature">
        <title>The DNA sequence and analysis of human chromosome 6.</title>
        <authorList>
            <person name="Mungall A.J."/>
            <person name="Palmer S.A."/>
            <person name="Sims S.K."/>
            <person name="Edwards C.A."/>
            <person name="Ashurst J.L."/>
            <person name="Wilming L."/>
            <person name="Jones M.C."/>
            <person name="Horton R."/>
            <person name="Hunt S.E."/>
            <person name="Scott C.E."/>
            <person name="Gilbert J.G.R."/>
            <person name="Clamp M.E."/>
            <person name="Bethel G."/>
            <person name="Milne S."/>
            <person name="Ainscough R."/>
            <person name="Almeida J.P."/>
            <person name="Ambrose K.D."/>
            <person name="Andrews T.D."/>
            <person name="Ashwell R.I.S."/>
            <person name="Babbage A.K."/>
            <person name="Bagguley C.L."/>
            <person name="Bailey J."/>
            <person name="Banerjee R."/>
            <person name="Barker D.J."/>
            <person name="Barlow K.F."/>
            <person name="Bates K."/>
            <person name="Beare D.M."/>
            <person name="Beasley H."/>
            <person name="Beasley O."/>
            <person name="Bird C.P."/>
            <person name="Blakey S.E."/>
            <person name="Bray-Allen S."/>
            <person name="Brook J."/>
            <person name="Brown A.J."/>
            <person name="Brown J.Y."/>
            <person name="Burford D.C."/>
            <person name="Burrill W."/>
            <person name="Burton J."/>
            <person name="Carder C."/>
            <person name="Carter N.P."/>
            <person name="Chapman J.C."/>
            <person name="Clark S.Y."/>
            <person name="Clark G."/>
            <person name="Clee C.M."/>
            <person name="Clegg S."/>
            <person name="Cobley V."/>
            <person name="Collier R.E."/>
            <person name="Collins J.E."/>
            <person name="Colman L.K."/>
            <person name="Corby N.R."/>
            <person name="Coville G.J."/>
            <person name="Culley K.M."/>
            <person name="Dhami P."/>
            <person name="Davies J."/>
            <person name="Dunn M."/>
            <person name="Earthrowl M.E."/>
            <person name="Ellington A.E."/>
            <person name="Evans K.A."/>
            <person name="Faulkner L."/>
            <person name="Francis M.D."/>
            <person name="Frankish A."/>
            <person name="Frankland J."/>
            <person name="French L."/>
            <person name="Garner P."/>
            <person name="Garnett J."/>
            <person name="Ghori M.J."/>
            <person name="Gilby L.M."/>
            <person name="Gillson C.J."/>
            <person name="Glithero R.J."/>
            <person name="Grafham D.V."/>
            <person name="Grant M."/>
            <person name="Gribble S."/>
            <person name="Griffiths C."/>
            <person name="Griffiths M.N.D."/>
            <person name="Hall R."/>
            <person name="Halls K.S."/>
            <person name="Hammond S."/>
            <person name="Harley J.L."/>
            <person name="Hart E.A."/>
            <person name="Heath P.D."/>
            <person name="Heathcott R."/>
            <person name="Holmes S.J."/>
            <person name="Howden P.J."/>
            <person name="Howe K.L."/>
            <person name="Howell G.R."/>
            <person name="Huckle E."/>
            <person name="Humphray S.J."/>
            <person name="Humphries M.D."/>
            <person name="Hunt A.R."/>
            <person name="Johnson C.M."/>
            <person name="Joy A.A."/>
            <person name="Kay M."/>
            <person name="Keenan S.J."/>
            <person name="Kimberley A.M."/>
            <person name="King A."/>
            <person name="Laird G.K."/>
            <person name="Langford C."/>
            <person name="Lawlor S."/>
            <person name="Leongamornlert D.A."/>
            <person name="Leversha M."/>
            <person name="Lloyd C.R."/>
            <person name="Lloyd D.M."/>
            <person name="Loveland J.E."/>
            <person name="Lovell J."/>
            <person name="Martin S."/>
            <person name="Mashreghi-Mohammadi M."/>
            <person name="Maslen G.L."/>
            <person name="Matthews L."/>
            <person name="McCann O.T."/>
            <person name="McLaren S.J."/>
            <person name="McLay K."/>
            <person name="McMurray A."/>
            <person name="Moore M.J.F."/>
            <person name="Mullikin J.C."/>
            <person name="Niblett D."/>
            <person name="Nickerson T."/>
            <person name="Novik K.L."/>
            <person name="Oliver K."/>
            <person name="Overton-Larty E.K."/>
            <person name="Parker A."/>
            <person name="Patel R."/>
            <person name="Pearce A.V."/>
            <person name="Peck A.I."/>
            <person name="Phillimore B.J.C.T."/>
            <person name="Phillips S."/>
            <person name="Plumb R.W."/>
            <person name="Porter K.M."/>
            <person name="Ramsey Y."/>
            <person name="Ranby S.A."/>
            <person name="Rice C.M."/>
            <person name="Ross M.T."/>
            <person name="Searle S.M."/>
            <person name="Sehra H.K."/>
            <person name="Sheridan E."/>
            <person name="Skuce C.D."/>
            <person name="Smith S."/>
            <person name="Smith M."/>
            <person name="Spraggon L."/>
            <person name="Squares S.L."/>
            <person name="Steward C.A."/>
            <person name="Sycamore N."/>
            <person name="Tamlyn-Hall G."/>
            <person name="Tester J."/>
            <person name="Theaker A.J."/>
            <person name="Thomas D.W."/>
            <person name="Thorpe A."/>
            <person name="Tracey A."/>
            <person name="Tromans A."/>
            <person name="Tubby B."/>
            <person name="Wall M."/>
            <person name="Wallis J.M."/>
            <person name="West A.P."/>
            <person name="White S.S."/>
            <person name="Whitehead S.L."/>
            <person name="Whittaker H."/>
            <person name="Wild A."/>
            <person name="Willey D.J."/>
            <person name="Wilmer T.E."/>
            <person name="Wood J.M."/>
            <person name="Wray P.W."/>
            <person name="Wyatt J.C."/>
            <person name="Young L."/>
            <person name="Younger R.M."/>
            <person name="Bentley D.R."/>
            <person name="Coulson A."/>
            <person name="Durbin R.M."/>
            <person name="Hubbard T."/>
            <person name="Sulston J.E."/>
            <person name="Dunham I."/>
            <person name="Rogers J."/>
            <person name="Beck S."/>
        </authorList>
    </citation>
    <scope>NUCLEOTIDE SEQUENCE [LARGE SCALE GENOMIC DNA]</scope>
</reference>
<reference key="3">
    <citation type="submission" date="2005-09" db="EMBL/GenBank/DDBJ databases">
        <authorList>
            <person name="Mural R.J."/>
            <person name="Istrail S."/>
            <person name="Sutton G.G."/>
            <person name="Florea L."/>
            <person name="Halpern A.L."/>
            <person name="Mobarry C.M."/>
            <person name="Lippert R."/>
            <person name="Walenz B."/>
            <person name="Shatkay H."/>
            <person name="Dew I."/>
            <person name="Miller J.R."/>
            <person name="Flanigan M.J."/>
            <person name="Edwards N.J."/>
            <person name="Bolanos R."/>
            <person name="Fasulo D."/>
            <person name="Halldorsson B.V."/>
            <person name="Hannenhalli S."/>
            <person name="Turner R."/>
            <person name="Yooseph S."/>
            <person name="Lu F."/>
            <person name="Nusskern D.R."/>
            <person name="Shue B.C."/>
            <person name="Zheng X.H."/>
            <person name="Zhong F."/>
            <person name="Delcher A.L."/>
            <person name="Huson D.H."/>
            <person name="Kravitz S.A."/>
            <person name="Mouchard L."/>
            <person name="Reinert K."/>
            <person name="Remington K.A."/>
            <person name="Clark A.G."/>
            <person name="Waterman M.S."/>
            <person name="Eichler E.E."/>
            <person name="Adams M.D."/>
            <person name="Hunkapiller M.W."/>
            <person name="Myers E.W."/>
            <person name="Venter J.C."/>
        </authorList>
    </citation>
    <scope>NUCLEOTIDE SEQUENCE [LARGE SCALE GENOMIC DNA]</scope>
</reference>
<reference key="4">
    <citation type="journal article" date="2004" name="Genome Res.">
        <title>The status, quality, and expansion of the NIH full-length cDNA project: the Mammalian Gene Collection (MGC).</title>
        <authorList>
            <consortium name="The MGC Project Team"/>
        </authorList>
    </citation>
    <scope>NUCLEOTIDE SEQUENCE [LARGE SCALE MRNA] (ISOFORM 2)</scope>
    <scope>VARIANT ASN-183</scope>
    <source>
        <tissue>Placenta</tissue>
    </source>
</reference>
<reference key="5">
    <citation type="journal article" date="2006" name="Cell">
        <title>Global, in vivo, and site-specific phosphorylation dynamics in signaling networks.</title>
        <authorList>
            <person name="Olsen J.V."/>
            <person name="Blagoev B."/>
            <person name="Gnad F."/>
            <person name="Macek B."/>
            <person name="Kumar C."/>
            <person name="Mortensen P."/>
            <person name="Mann M."/>
        </authorList>
    </citation>
    <scope>IDENTIFICATION BY MASS SPECTROMETRY [LARGE SCALE ANALYSIS]</scope>
    <source>
        <tissue>Cervix carcinoma</tissue>
    </source>
</reference>
<reference key="6">
    <citation type="journal article" date="2009" name="Sci. Signal.">
        <title>Quantitative phosphoproteomic analysis of T cell receptor signaling reveals system-wide modulation of protein-protein interactions.</title>
        <authorList>
            <person name="Mayya V."/>
            <person name="Lundgren D.H."/>
            <person name="Hwang S.-I."/>
            <person name="Rezaul K."/>
            <person name="Wu L."/>
            <person name="Eng J.K."/>
            <person name="Rodionov V."/>
            <person name="Han D.K."/>
        </authorList>
    </citation>
    <scope>PHOSPHORYLATION [LARGE SCALE ANALYSIS] AT SER-608</scope>
    <scope>IDENTIFICATION BY MASS SPECTROMETRY [LARGE SCALE ANALYSIS]</scope>
    <source>
        <tissue>Leukemic T-cell</tissue>
    </source>
</reference>
<reference key="7">
    <citation type="journal article" date="2010" name="Sci. Signal.">
        <title>Quantitative phosphoproteomics reveals widespread full phosphorylation site occupancy during mitosis.</title>
        <authorList>
            <person name="Olsen J.V."/>
            <person name="Vermeulen M."/>
            <person name="Santamaria A."/>
            <person name="Kumar C."/>
            <person name="Miller M.L."/>
            <person name="Jensen L.J."/>
            <person name="Gnad F."/>
            <person name="Cox J."/>
            <person name="Jensen T.S."/>
            <person name="Nigg E.A."/>
            <person name="Brunak S."/>
            <person name="Mann M."/>
        </authorList>
    </citation>
    <scope>IDENTIFICATION BY MASS SPECTROMETRY [LARGE SCALE ANALYSIS]</scope>
    <source>
        <tissue>Cervix carcinoma</tissue>
    </source>
</reference>
<reference key="8">
    <citation type="journal article" date="2011" name="Sci. Signal.">
        <title>System-wide temporal characterization of the proteome and phosphoproteome of human embryonic stem cell differentiation.</title>
        <authorList>
            <person name="Rigbolt K.T."/>
            <person name="Prokhorova T.A."/>
            <person name="Akimov V."/>
            <person name="Henningsen J."/>
            <person name="Johansen P.T."/>
            <person name="Kratchmarova I."/>
            <person name="Kassem M."/>
            <person name="Mann M."/>
            <person name="Olsen J.V."/>
            <person name="Blagoev B."/>
        </authorList>
    </citation>
    <scope>PHOSPHORYLATION [LARGE SCALE ANALYSIS] AT SER-608</scope>
    <scope>IDENTIFICATION BY MASS SPECTROMETRY [LARGE SCALE ANALYSIS]</scope>
</reference>
<reference key="9">
    <citation type="journal article" date="2013" name="J. Proteome Res.">
        <title>Toward a comprehensive characterization of a human cancer cell phosphoproteome.</title>
        <authorList>
            <person name="Zhou H."/>
            <person name="Di Palma S."/>
            <person name="Preisinger C."/>
            <person name="Peng M."/>
            <person name="Polat A.N."/>
            <person name="Heck A.J."/>
            <person name="Mohammed S."/>
        </authorList>
    </citation>
    <scope>PHOSPHORYLATION [LARGE SCALE ANALYSIS] AT SER-608</scope>
    <scope>IDENTIFICATION BY MASS SPECTROMETRY [LARGE SCALE ANALYSIS]</scope>
    <source>
        <tissue>Cervix carcinoma</tissue>
        <tissue>Erythroleukemia</tissue>
    </source>
</reference>
<reference key="10">
    <citation type="journal article" date="2014" name="J. Proteomics">
        <title>An enzyme assisted RP-RPLC approach for in-depth analysis of human liver phosphoproteome.</title>
        <authorList>
            <person name="Bian Y."/>
            <person name="Song C."/>
            <person name="Cheng K."/>
            <person name="Dong M."/>
            <person name="Wang F."/>
            <person name="Huang J."/>
            <person name="Sun D."/>
            <person name="Wang L."/>
            <person name="Ye M."/>
            <person name="Zou H."/>
        </authorList>
    </citation>
    <scope>PHOSPHORYLATION [LARGE SCALE ANALYSIS] AT SER-608</scope>
    <scope>IDENTIFICATION BY MASS SPECTROMETRY [LARGE SCALE ANALYSIS]</scope>
    <source>
        <tissue>Liver</tissue>
    </source>
</reference>
<reference key="11">
    <citation type="journal article" date="2017" name="Nat. Struct. Mol. Biol.">
        <title>Site-specific mapping of the human SUMO proteome reveals co-modification with phosphorylation.</title>
        <authorList>
            <person name="Hendriks I.A."/>
            <person name="Lyon D."/>
            <person name="Young C."/>
            <person name="Jensen L.J."/>
            <person name="Vertegaal A.C."/>
            <person name="Nielsen M.L."/>
        </authorList>
    </citation>
    <scope>SUMOYLATION [LARGE SCALE ANALYSIS] AT LYS-637 AND LYS-704</scope>
    <scope>IDENTIFICATION BY MASS SPECTROMETRY [LARGE SCALE ANALYSIS]</scope>
</reference>
<reference key="12">
    <citation type="journal article" date="2021" name="Sci. Adv.">
        <title>The SAM domain-containing protein 1 (SAMD1) acts as a repressive chromatin regulator at unmethylated CpG islands.</title>
        <authorList>
            <person name="Stielow B."/>
            <person name="Zhou Y."/>
            <person name="Cao Y."/>
            <person name="Simon C."/>
            <person name="Pogoda H.M."/>
            <person name="Jiang J."/>
            <person name="Ren Y."/>
            <person name="Phanor S.K."/>
            <person name="Rohner I."/>
            <person name="Nist A."/>
            <person name="Stiewe T."/>
            <person name="Hammerschmidt M."/>
            <person name="Shi Y."/>
            <person name="Bulyk M.L."/>
            <person name="Wang Z."/>
            <person name="Liefke R."/>
        </authorList>
    </citation>
    <scope>INTERACTION WITH SAMD1</scope>
    <scope>SUBCELLULAR LOCATION</scope>
</reference>
<reference key="13">
    <citation type="journal article" date="2017" name="EMBO J.">
        <title>RBPJ/CBF1 interacts with L3MBTL3/MBT1 to promote repression of Notch signaling via histone demethylase KDM1A/LSD1.</title>
        <authorList>
            <person name="Xu T."/>
            <person name="Park S.S."/>
            <person name="Giaimo B.D."/>
            <person name="Hall D."/>
            <person name="Ferrante F."/>
            <person name="Ho D.M."/>
            <person name="Hori K."/>
            <person name="Anhezini L."/>
            <person name="Ertl I."/>
            <person name="Bartkuhn M."/>
            <person name="Zhang H."/>
            <person name="Milon E."/>
            <person name="Ha K."/>
            <person name="Conlon K.P."/>
            <person name="Kuick R."/>
            <person name="Govindarajoo B."/>
            <person name="Zhang Y."/>
            <person name="Sun Y."/>
            <person name="Dou Y."/>
            <person name="Basrur V."/>
            <person name="Elenitoba-Johnson K.S."/>
            <person name="Nesvizhskii A.I."/>
            <person name="Ceron J."/>
            <person name="Lee C.Y."/>
            <person name="Borggrefe T."/>
            <person name="Kovall R.A."/>
            <person name="Rual J.F."/>
        </authorList>
    </citation>
    <scope>FUNCTION</scope>
    <scope>INTERACTION WITH RBPJ AND KDM1A</scope>
</reference>
<reference key="14">
    <citation type="journal article" date="2018" name="Nat. Commun.">
        <title>Methylated DNMT1 and E2F1 are targeted for proteolysis by L3MBTL3 and CRL4-DCAF5 ubiquitin ligase.</title>
        <authorList>
            <person name="Leng F."/>
            <person name="Yu J."/>
            <person name="Zhang C."/>
            <person name="Alejo S."/>
            <person name="Hoang N."/>
            <person name="Sun H."/>
            <person name="Lu F."/>
            <person name="Zhang H."/>
        </authorList>
    </citation>
    <scope>FUNCTION</scope>
    <scope>INTERACTION WITH DCAF5; DNMT1 AND E2F1</scope>
    <scope>REGION</scope>
    <scope>MUTAGENESIS OF ASP-381</scope>
</reference>
<reference key="15">
    <citation type="journal article" date="2019" name="J. Biol. Chem.">
        <title>Proteolysis of methylated SOX2 protein is regulated by L3MBTL3 and CRL4-DCAF5 ubiquitin ligase.</title>
        <authorList>
            <person name="Zhang C."/>
            <person name="Leng F."/>
            <person name="Saxena L."/>
            <person name="Hoang N."/>
            <person name="Yu J."/>
            <person name="Alejo S."/>
            <person name="Lee L."/>
            <person name="Qi D."/>
            <person name="Lu F."/>
            <person name="Sun H."/>
            <person name="Zhang H."/>
        </authorList>
    </citation>
    <scope>FUNCTION</scope>
    <scope>INTERACTION WITH SOX2</scope>
</reference>
<reference key="16">
    <citation type="submission" date="2004-11" db="PDB data bank">
        <title>Solution structure of the first and third MBT domain from human KIAA1798 protein.</title>
        <authorList>
            <consortium name="RIKEN structural genomics initiative (RSGI)"/>
        </authorList>
    </citation>
    <scope>STRUCTURE BY NMR OF 256-562</scope>
</reference>